<sequence length="457" mass="53246">MQTIDFEKFSQYSKPGPRYTSYPTAVEFNENFNEESLKTAFFNHDNLKNPMPLSLYTHLPFCRSACYFCACSVIYTSLEEKKIRYISYLKKELALLKNAMDTNREVAQFHYGGGTPTFFSPIQLDEITQSIQEVFPNFSKDIEMSCEIDPRHFTKEHMQTLFDRGFNRLSFGVQDFDFEVQKAIHRIQPFEMVQESVKLARDYGIKSINFDLIYGLPNQTKEGFLKTLEWVLKLDPDRLAVFNYAHVPWVKKTMRKIDETLLPSLRDKLEILESLISFLEKANYQMIGMDHFAKSDNELYLALQKAELRRNFQGYTTKKFTQTIGIGVTSIGEGGDYYTQNYKDLHHYEKALDLGHLPVERGVALSQEDVLRKEVIMQMMSNLKLDYSKIEEKFSVDFKAHFKKELEKLKPYEEAGLLSFNSKGFEMTKTGGMLVRNMAMEFDAYLRGGEKHFSKTL</sequence>
<comment type="function">
    <text evidence="1">Involved in the heme biosynthesis. Catalyzes the anaerobic oxidative decarboxylation of propionate groups of rings A and B of coproporphyrinogen III to yield the vinyl groups in protoporphyrinogen IX.</text>
</comment>
<comment type="catalytic activity">
    <reaction evidence="1">
        <text>coproporphyrinogen III + 2 S-adenosyl-L-methionine = protoporphyrinogen IX + 2 5'-deoxyadenosine + 2 L-methionine + 2 CO2</text>
        <dbReference type="Rhea" id="RHEA:15425"/>
        <dbReference type="ChEBI" id="CHEBI:16526"/>
        <dbReference type="ChEBI" id="CHEBI:17319"/>
        <dbReference type="ChEBI" id="CHEBI:57307"/>
        <dbReference type="ChEBI" id="CHEBI:57309"/>
        <dbReference type="ChEBI" id="CHEBI:57844"/>
        <dbReference type="ChEBI" id="CHEBI:59789"/>
        <dbReference type="EC" id="1.3.98.3"/>
    </reaction>
</comment>
<comment type="cofactor">
    <cofactor evidence="1">
        <name>[4Fe-4S] cluster</name>
        <dbReference type="ChEBI" id="CHEBI:49883"/>
    </cofactor>
    <text evidence="1">Binds 1 [4Fe-4S] cluster. The cluster is coordinated with 3 cysteines and an exchangeable S-adenosyl-L-methionine.</text>
</comment>
<comment type="pathway">
    <text>Porphyrin-containing compound metabolism; protoporphyrin-IX biosynthesis; protoporphyrinogen-IX from coproporphyrinogen-III (AdoMet route): step 1/1.</text>
</comment>
<comment type="subunit">
    <text evidence="1">Monomer.</text>
</comment>
<comment type="subcellular location">
    <subcellularLocation>
        <location evidence="1">Cytoplasm</location>
    </subcellularLocation>
</comment>
<comment type="similarity">
    <text evidence="3">Belongs to the anaerobic coproporphyrinogen-III oxidase family.</text>
</comment>
<accession>O25376</accession>
<keyword id="KW-0004">4Fe-4S</keyword>
<keyword id="KW-0963">Cytoplasm</keyword>
<keyword id="KW-0408">Iron</keyword>
<keyword id="KW-0411">Iron-sulfur</keyword>
<keyword id="KW-0479">Metal-binding</keyword>
<keyword id="KW-0560">Oxidoreductase</keyword>
<keyword id="KW-0627">Porphyrin biosynthesis</keyword>
<keyword id="KW-1185">Reference proteome</keyword>
<keyword id="KW-0949">S-adenosyl-L-methionine</keyword>
<evidence type="ECO:0000250" key="1">
    <source>
        <dbReference type="UniProtKB" id="P32131"/>
    </source>
</evidence>
<evidence type="ECO:0000255" key="2">
    <source>
        <dbReference type="PROSITE-ProRule" id="PRU01266"/>
    </source>
</evidence>
<evidence type="ECO:0000305" key="3"/>
<protein>
    <recommendedName>
        <fullName>Oxygen-independent coproporphyrinogen III oxidase</fullName>
        <shortName>CPO</shortName>
        <ecNumber evidence="1">1.3.98.3</ecNumber>
    </recommendedName>
    <alternativeName>
        <fullName>Coproporphyrinogen III dehydrogenase</fullName>
        <shortName>CPDH</shortName>
    </alternativeName>
</protein>
<reference key="1">
    <citation type="journal article" date="1997" name="Nature">
        <title>The complete genome sequence of the gastric pathogen Helicobacter pylori.</title>
        <authorList>
            <person name="Tomb J.-F."/>
            <person name="White O."/>
            <person name="Kerlavage A.R."/>
            <person name="Clayton R.A."/>
            <person name="Sutton G.G."/>
            <person name="Fleischmann R.D."/>
            <person name="Ketchum K.A."/>
            <person name="Klenk H.-P."/>
            <person name="Gill S.R."/>
            <person name="Dougherty B.A."/>
            <person name="Nelson K.E."/>
            <person name="Quackenbush J."/>
            <person name="Zhou L."/>
            <person name="Kirkness E.F."/>
            <person name="Peterson S.N."/>
            <person name="Loftus B.J."/>
            <person name="Richardson D.L."/>
            <person name="Dodson R.J."/>
            <person name="Khalak H.G."/>
            <person name="Glodek A."/>
            <person name="McKenney K."/>
            <person name="FitzGerald L.M."/>
            <person name="Lee N."/>
            <person name="Adams M.D."/>
            <person name="Hickey E.K."/>
            <person name="Berg D.E."/>
            <person name="Gocayne J.D."/>
            <person name="Utterback T.R."/>
            <person name="Peterson J.D."/>
            <person name="Kelley J.M."/>
            <person name="Cotton M.D."/>
            <person name="Weidman J.F."/>
            <person name="Fujii C."/>
            <person name="Bowman C."/>
            <person name="Watthey L."/>
            <person name="Wallin E."/>
            <person name="Hayes W.S."/>
            <person name="Borodovsky M."/>
            <person name="Karp P.D."/>
            <person name="Smith H.O."/>
            <person name="Fraser C.M."/>
            <person name="Venter J.C."/>
        </authorList>
    </citation>
    <scope>NUCLEOTIDE SEQUENCE [LARGE SCALE GENOMIC DNA]</scope>
    <source>
        <strain>ATCC 700392 / 26695</strain>
    </source>
</reference>
<feature type="chain" id="PRO_0000109942" description="Oxygen-independent coproporphyrinogen III oxidase">
    <location>
        <begin position="1"/>
        <end position="457"/>
    </location>
</feature>
<feature type="domain" description="Radical SAM core" evidence="2">
    <location>
        <begin position="47"/>
        <end position="279"/>
    </location>
</feature>
<feature type="binding site" evidence="1">
    <location>
        <position position="56"/>
    </location>
    <ligand>
        <name>S-adenosyl-L-methionine</name>
        <dbReference type="ChEBI" id="CHEBI:59789"/>
        <label>1</label>
    </ligand>
</feature>
<feature type="binding site" evidence="1">
    <location>
        <position position="62"/>
    </location>
    <ligand>
        <name>[4Fe-4S] cluster</name>
        <dbReference type="ChEBI" id="CHEBI:49883"/>
        <note>4Fe-4S-S-AdoMet</note>
    </ligand>
</feature>
<feature type="binding site" evidence="1">
    <location>
        <position position="66"/>
    </location>
    <ligand>
        <name>[4Fe-4S] cluster</name>
        <dbReference type="ChEBI" id="CHEBI:49883"/>
        <note>4Fe-4S-S-AdoMet</note>
    </ligand>
</feature>
<feature type="binding site" evidence="1">
    <location>
        <position position="68"/>
    </location>
    <ligand>
        <name>S-adenosyl-L-methionine</name>
        <dbReference type="ChEBI" id="CHEBI:59789"/>
        <label>2</label>
    </ligand>
</feature>
<feature type="binding site" evidence="1">
    <location>
        <position position="69"/>
    </location>
    <ligand>
        <name>[4Fe-4S] cluster</name>
        <dbReference type="ChEBI" id="CHEBI:49883"/>
        <note>4Fe-4S-S-AdoMet</note>
    </ligand>
</feature>
<feature type="binding site" evidence="1">
    <location>
        <position position="113"/>
    </location>
    <ligand>
        <name>S-adenosyl-L-methionine</name>
        <dbReference type="ChEBI" id="CHEBI:59789"/>
        <label>1</label>
    </ligand>
</feature>
<feature type="binding site" evidence="1">
    <location>
        <begin position="114"/>
        <end position="115"/>
    </location>
    <ligand>
        <name>S-adenosyl-L-methionine</name>
        <dbReference type="ChEBI" id="CHEBI:59789"/>
        <label>2</label>
    </ligand>
</feature>
<feature type="binding site" evidence="1">
    <location>
        <position position="147"/>
    </location>
    <ligand>
        <name>S-adenosyl-L-methionine</name>
        <dbReference type="ChEBI" id="CHEBI:59789"/>
        <label>1</label>
    </ligand>
</feature>
<feature type="binding site" evidence="1">
    <location>
        <position position="174"/>
    </location>
    <ligand>
        <name>S-adenosyl-L-methionine</name>
        <dbReference type="ChEBI" id="CHEBI:59789"/>
        <label>2</label>
    </ligand>
</feature>
<feature type="binding site" evidence="1">
    <location>
        <position position="186"/>
    </location>
    <ligand>
        <name>S-adenosyl-L-methionine</name>
        <dbReference type="ChEBI" id="CHEBI:59789"/>
        <label>2</label>
    </ligand>
</feature>
<feature type="binding site" evidence="1">
    <location>
        <position position="211"/>
    </location>
    <ligand>
        <name>S-adenosyl-L-methionine</name>
        <dbReference type="ChEBI" id="CHEBI:59789"/>
        <label>2</label>
    </ligand>
</feature>
<feature type="binding site" evidence="1">
    <location>
        <position position="245"/>
    </location>
    <ligand>
        <name>S-adenosyl-L-methionine</name>
        <dbReference type="ChEBI" id="CHEBI:59789"/>
        <label>2</label>
    </ligand>
</feature>
<feature type="binding site" evidence="1">
    <location>
        <position position="331"/>
    </location>
    <ligand>
        <name>S-adenosyl-L-methionine</name>
        <dbReference type="ChEBI" id="CHEBI:59789"/>
        <label>1</label>
    </ligand>
</feature>
<name>HEMN_HELPY</name>
<organism>
    <name type="scientific">Helicobacter pylori (strain ATCC 700392 / 26695)</name>
    <name type="common">Campylobacter pylori</name>
    <dbReference type="NCBI Taxonomy" id="85962"/>
    <lineage>
        <taxon>Bacteria</taxon>
        <taxon>Pseudomonadati</taxon>
        <taxon>Campylobacterota</taxon>
        <taxon>Epsilonproteobacteria</taxon>
        <taxon>Campylobacterales</taxon>
        <taxon>Helicobacteraceae</taxon>
        <taxon>Helicobacter</taxon>
    </lineage>
</organism>
<gene>
    <name type="primary">hemN</name>
    <name type="ordered locus">HP_0665</name>
</gene>
<proteinExistence type="inferred from homology"/>
<dbReference type="EC" id="1.3.98.3" evidence="1"/>
<dbReference type="EMBL" id="AE000511">
    <property type="protein sequence ID" value="AAD07727.1"/>
    <property type="molecule type" value="Genomic_DNA"/>
</dbReference>
<dbReference type="PIR" id="A64603">
    <property type="entry name" value="A64603"/>
</dbReference>
<dbReference type="RefSeq" id="NP_207459.1">
    <property type="nucleotide sequence ID" value="NC_000915.1"/>
</dbReference>
<dbReference type="RefSeq" id="WP_001193216.1">
    <property type="nucleotide sequence ID" value="NC_018939.1"/>
</dbReference>
<dbReference type="SMR" id="O25376"/>
<dbReference type="FunCoup" id="O25376">
    <property type="interactions" value="172"/>
</dbReference>
<dbReference type="IntAct" id="O25376">
    <property type="interactions" value="2"/>
</dbReference>
<dbReference type="MINT" id="O25376"/>
<dbReference type="STRING" id="85962.HP_0665"/>
<dbReference type="PaxDb" id="85962-C694_03440"/>
<dbReference type="EnsemblBacteria" id="AAD07727">
    <property type="protein sequence ID" value="AAD07727"/>
    <property type="gene ID" value="HP_0665"/>
</dbReference>
<dbReference type="KEGG" id="heo:C694_03440"/>
<dbReference type="KEGG" id="hpy:HP_0665"/>
<dbReference type="PATRIC" id="fig|85962.47.peg.715"/>
<dbReference type="eggNOG" id="COG0635">
    <property type="taxonomic scope" value="Bacteria"/>
</dbReference>
<dbReference type="InParanoid" id="O25376"/>
<dbReference type="OrthoDB" id="9808022at2"/>
<dbReference type="PhylomeDB" id="O25376"/>
<dbReference type="UniPathway" id="UPA00251">
    <property type="reaction ID" value="UER00323"/>
</dbReference>
<dbReference type="Proteomes" id="UP000000429">
    <property type="component" value="Chromosome"/>
</dbReference>
<dbReference type="GO" id="GO:0005737">
    <property type="term" value="C:cytoplasm"/>
    <property type="evidence" value="ECO:0000250"/>
    <property type="project" value="UniProtKB"/>
</dbReference>
<dbReference type="GO" id="GO:0051539">
    <property type="term" value="F:4 iron, 4 sulfur cluster binding"/>
    <property type="evidence" value="ECO:0000250"/>
    <property type="project" value="UniProtKB"/>
</dbReference>
<dbReference type="GO" id="GO:0051989">
    <property type="term" value="F:coproporphyrinogen dehydrogenase activity"/>
    <property type="evidence" value="ECO:0000250"/>
    <property type="project" value="UniProtKB"/>
</dbReference>
<dbReference type="GO" id="GO:0004109">
    <property type="term" value="F:coproporphyrinogen oxidase activity"/>
    <property type="evidence" value="ECO:0007669"/>
    <property type="project" value="InterPro"/>
</dbReference>
<dbReference type="GO" id="GO:0046872">
    <property type="term" value="F:metal ion binding"/>
    <property type="evidence" value="ECO:0007669"/>
    <property type="project" value="UniProtKB-KW"/>
</dbReference>
<dbReference type="GO" id="GO:0006779">
    <property type="term" value="P:porphyrin-containing compound biosynthetic process"/>
    <property type="evidence" value="ECO:0000250"/>
    <property type="project" value="UniProtKB"/>
</dbReference>
<dbReference type="GO" id="GO:0006782">
    <property type="term" value="P:protoporphyrinogen IX biosynthetic process"/>
    <property type="evidence" value="ECO:0000250"/>
    <property type="project" value="UniProtKB"/>
</dbReference>
<dbReference type="CDD" id="cd01335">
    <property type="entry name" value="Radical_SAM"/>
    <property type="match status" value="1"/>
</dbReference>
<dbReference type="FunFam" id="1.10.10.920:FF:000001">
    <property type="entry name" value="Coproporphyrinogen-III oxidase"/>
    <property type="match status" value="1"/>
</dbReference>
<dbReference type="FunFam" id="3.80.30.20:FF:000012">
    <property type="entry name" value="Coproporphyrinogen-III oxidase"/>
    <property type="match status" value="1"/>
</dbReference>
<dbReference type="Gene3D" id="1.10.10.920">
    <property type="match status" value="1"/>
</dbReference>
<dbReference type="Gene3D" id="3.80.30.20">
    <property type="entry name" value="tm_1862 like domain"/>
    <property type="match status" value="1"/>
</dbReference>
<dbReference type="InterPro" id="IPR004558">
    <property type="entry name" value="Coprogen_oxidase_HemN"/>
</dbReference>
<dbReference type="InterPro" id="IPR034505">
    <property type="entry name" value="Coproporphyrinogen-III_oxidase"/>
</dbReference>
<dbReference type="InterPro" id="IPR006638">
    <property type="entry name" value="Elp3/MiaA/NifB-like_rSAM"/>
</dbReference>
<dbReference type="InterPro" id="IPR010723">
    <property type="entry name" value="HemN_C"/>
</dbReference>
<dbReference type="InterPro" id="IPR007197">
    <property type="entry name" value="rSAM"/>
</dbReference>
<dbReference type="InterPro" id="IPR023404">
    <property type="entry name" value="rSAM_horseshoe"/>
</dbReference>
<dbReference type="NCBIfam" id="TIGR00538">
    <property type="entry name" value="hemN"/>
    <property type="match status" value="1"/>
</dbReference>
<dbReference type="PANTHER" id="PTHR13932">
    <property type="entry name" value="COPROPORPHYRINIGEN III OXIDASE"/>
    <property type="match status" value="1"/>
</dbReference>
<dbReference type="PANTHER" id="PTHR13932:SF6">
    <property type="entry name" value="OXYGEN-INDEPENDENT COPROPORPHYRINOGEN III OXIDASE"/>
    <property type="match status" value="1"/>
</dbReference>
<dbReference type="Pfam" id="PF06969">
    <property type="entry name" value="HemN_C"/>
    <property type="match status" value="1"/>
</dbReference>
<dbReference type="Pfam" id="PF04055">
    <property type="entry name" value="Radical_SAM"/>
    <property type="match status" value="1"/>
</dbReference>
<dbReference type="PIRSF" id="PIRSF000167">
    <property type="entry name" value="HemN"/>
    <property type="match status" value="1"/>
</dbReference>
<dbReference type="SFLD" id="SFLDG01065">
    <property type="entry name" value="anaerobic_coproporphyrinogen-I"/>
    <property type="match status" value="1"/>
</dbReference>
<dbReference type="SFLD" id="SFLDG01082">
    <property type="entry name" value="B12-binding_domain_containing"/>
    <property type="match status" value="1"/>
</dbReference>
<dbReference type="SFLD" id="SFLDF00277">
    <property type="entry name" value="oxygen-independent_coproporphy"/>
    <property type="match status" value="1"/>
</dbReference>
<dbReference type="SMART" id="SM00729">
    <property type="entry name" value="Elp3"/>
    <property type="match status" value="1"/>
</dbReference>
<dbReference type="SUPFAM" id="SSF102114">
    <property type="entry name" value="Radical SAM enzymes"/>
    <property type="match status" value="1"/>
</dbReference>
<dbReference type="PROSITE" id="PS51918">
    <property type="entry name" value="RADICAL_SAM"/>
    <property type="match status" value="1"/>
</dbReference>